<reference key="1">
    <citation type="journal article" date="2010" name="Genome Biol. Evol.">
        <title>Continuing evolution of Burkholderia mallei through genome reduction and large-scale rearrangements.</title>
        <authorList>
            <person name="Losada L."/>
            <person name="Ronning C.M."/>
            <person name="DeShazer D."/>
            <person name="Woods D."/>
            <person name="Fedorova N."/>
            <person name="Kim H.S."/>
            <person name="Shabalina S.A."/>
            <person name="Pearson T.R."/>
            <person name="Brinkac L."/>
            <person name="Tan P."/>
            <person name="Nandi T."/>
            <person name="Crabtree J."/>
            <person name="Badger J."/>
            <person name="Beckstrom-Sternberg S."/>
            <person name="Saqib M."/>
            <person name="Schutzer S.E."/>
            <person name="Keim P."/>
            <person name="Nierman W.C."/>
        </authorList>
    </citation>
    <scope>NUCLEOTIDE SEQUENCE [LARGE SCALE GENOMIC DNA]</scope>
    <source>
        <strain>1106a</strain>
    </source>
</reference>
<sequence>MKQDSRFPNLFILDHPLIQHKLTHMRDKDTSTRTFRELLREITLLMGYEITRNLPITTKRVETPLVEIDAPVIAGKKLAIVPVLRAGVGMSDGLLELIPSARVGHIGVYRADDHRPVEYLVRLPDLEDRIFILCDPMVATGYSAAHAIDVLKRRGVPGERLMFLALVAAPEGVQVFQDAHPDVKLYVASLDSHLDDHAYIVPGLGDAGDRLFGTKN</sequence>
<protein>
    <recommendedName>
        <fullName evidence="1">Uracil phosphoribosyltransferase</fullName>
        <ecNumber evidence="1">2.4.2.9</ecNumber>
    </recommendedName>
    <alternativeName>
        <fullName evidence="1">UMP pyrophosphorylase</fullName>
    </alternativeName>
    <alternativeName>
        <fullName evidence="1">UPRTase</fullName>
    </alternativeName>
</protein>
<gene>
    <name evidence="1" type="primary">upp</name>
    <name type="ordered locus">BURPS1106A_1242</name>
</gene>
<dbReference type="EC" id="2.4.2.9" evidence="1"/>
<dbReference type="EMBL" id="CP000572">
    <property type="protein sequence ID" value="ABN92336.1"/>
    <property type="molecule type" value="Genomic_DNA"/>
</dbReference>
<dbReference type="RefSeq" id="WP_004186446.1">
    <property type="nucleotide sequence ID" value="NC_009076.1"/>
</dbReference>
<dbReference type="SMR" id="A3NT50"/>
<dbReference type="GeneID" id="93059646"/>
<dbReference type="KEGG" id="bpl:BURPS1106A_1242"/>
<dbReference type="HOGENOM" id="CLU_067096_2_2_4"/>
<dbReference type="UniPathway" id="UPA00574">
    <property type="reaction ID" value="UER00636"/>
</dbReference>
<dbReference type="Proteomes" id="UP000006738">
    <property type="component" value="Chromosome I"/>
</dbReference>
<dbReference type="GO" id="GO:0005525">
    <property type="term" value="F:GTP binding"/>
    <property type="evidence" value="ECO:0007669"/>
    <property type="project" value="UniProtKB-KW"/>
</dbReference>
<dbReference type="GO" id="GO:0000287">
    <property type="term" value="F:magnesium ion binding"/>
    <property type="evidence" value="ECO:0007669"/>
    <property type="project" value="UniProtKB-UniRule"/>
</dbReference>
<dbReference type="GO" id="GO:0004845">
    <property type="term" value="F:uracil phosphoribosyltransferase activity"/>
    <property type="evidence" value="ECO:0007669"/>
    <property type="project" value="UniProtKB-UniRule"/>
</dbReference>
<dbReference type="GO" id="GO:0044206">
    <property type="term" value="P:UMP salvage"/>
    <property type="evidence" value="ECO:0007669"/>
    <property type="project" value="UniProtKB-UniRule"/>
</dbReference>
<dbReference type="GO" id="GO:0006223">
    <property type="term" value="P:uracil salvage"/>
    <property type="evidence" value="ECO:0007669"/>
    <property type="project" value="InterPro"/>
</dbReference>
<dbReference type="CDD" id="cd06223">
    <property type="entry name" value="PRTases_typeI"/>
    <property type="match status" value="1"/>
</dbReference>
<dbReference type="FunFam" id="3.40.50.2020:FF:000003">
    <property type="entry name" value="Uracil phosphoribosyltransferase"/>
    <property type="match status" value="1"/>
</dbReference>
<dbReference type="Gene3D" id="3.40.50.2020">
    <property type="match status" value="1"/>
</dbReference>
<dbReference type="HAMAP" id="MF_01218_B">
    <property type="entry name" value="Upp_B"/>
    <property type="match status" value="1"/>
</dbReference>
<dbReference type="InterPro" id="IPR000836">
    <property type="entry name" value="PRibTrfase_dom"/>
</dbReference>
<dbReference type="InterPro" id="IPR029057">
    <property type="entry name" value="PRTase-like"/>
</dbReference>
<dbReference type="InterPro" id="IPR034332">
    <property type="entry name" value="Upp_B"/>
</dbReference>
<dbReference type="InterPro" id="IPR050054">
    <property type="entry name" value="UPRTase/APRTase"/>
</dbReference>
<dbReference type="InterPro" id="IPR005765">
    <property type="entry name" value="Ura_phspho_trans"/>
</dbReference>
<dbReference type="NCBIfam" id="NF001097">
    <property type="entry name" value="PRK00129.1"/>
    <property type="match status" value="1"/>
</dbReference>
<dbReference type="NCBIfam" id="TIGR01091">
    <property type="entry name" value="upp"/>
    <property type="match status" value="1"/>
</dbReference>
<dbReference type="PANTHER" id="PTHR32315">
    <property type="entry name" value="ADENINE PHOSPHORIBOSYLTRANSFERASE"/>
    <property type="match status" value="1"/>
</dbReference>
<dbReference type="PANTHER" id="PTHR32315:SF4">
    <property type="entry name" value="URACIL PHOSPHORIBOSYLTRANSFERASE, CHLOROPLASTIC"/>
    <property type="match status" value="1"/>
</dbReference>
<dbReference type="Pfam" id="PF14681">
    <property type="entry name" value="UPRTase"/>
    <property type="match status" value="1"/>
</dbReference>
<dbReference type="SUPFAM" id="SSF53271">
    <property type="entry name" value="PRTase-like"/>
    <property type="match status" value="1"/>
</dbReference>
<comment type="function">
    <text evidence="1">Catalyzes the conversion of uracil and 5-phospho-alpha-D-ribose 1-diphosphate (PRPP) to UMP and diphosphate.</text>
</comment>
<comment type="catalytic activity">
    <reaction evidence="1">
        <text>UMP + diphosphate = 5-phospho-alpha-D-ribose 1-diphosphate + uracil</text>
        <dbReference type="Rhea" id="RHEA:13017"/>
        <dbReference type="ChEBI" id="CHEBI:17568"/>
        <dbReference type="ChEBI" id="CHEBI:33019"/>
        <dbReference type="ChEBI" id="CHEBI:57865"/>
        <dbReference type="ChEBI" id="CHEBI:58017"/>
        <dbReference type="EC" id="2.4.2.9"/>
    </reaction>
</comment>
<comment type="cofactor">
    <cofactor evidence="1">
        <name>Mg(2+)</name>
        <dbReference type="ChEBI" id="CHEBI:18420"/>
    </cofactor>
    <text evidence="1">Binds 1 Mg(2+) ion per subunit. The magnesium is bound as Mg-PRPP.</text>
</comment>
<comment type="activity regulation">
    <text evidence="1">Allosterically activated by GTP.</text>
</comment>
<comment type="pathway">
    <text evidence="1">Pyrimidine metabolism; UMP biosynthesis via salvage pathway; UMP from uracil: step 1/1.</text>
</comment>
<comment type="similarity">
    <text evidence="1">Belongs to the UPRTase family.</text>
</comment>
<accession>A3NT50</accession>
<keyword id="KW-0021">Allosteric enzyme</keyword>
<keyword id="KW-0328">Glycosyltransferase</keyword>
<keyword id="KW-0342">GTP-binding</keyword>
<keyword id="KW-0460">Magnesium</keyword>
<keyword id="KW-0547">Nucleotide-binding</keyword>
<keyword id="KW-0808">Transferase</keyword>
<name>UPP_BURP0</name>
<feature type="chain" id="PRO_1000053687" description="Uracil phosphoribosyltransferase">
    <location>
        <begin position="1"/>
        <end position="216"/>
    </location>
</feature>
<feature type="binding site" evidence="1">
    <location>
        <position position="85"/>
    </location>
    <ligand>
        <name>5-phospho-alpha-D-ribose 1-diphosphate</name>
        <dbReference type="ChEBI" id="CHEBI:58017"/>
    </ligand>
</feature>
<feature type="binding site" evidence="1">
    <location>
        <position position="110"/>
    </location>
    <ligand>
        <name>5-phospho-alpha-D-ribose 1-diphosphate</name>
        <dbReference type="ChEBI" id="CHEBI:58017"/>
    </ligand>
</feature>
<feature type="binding site" evidence="1">
    <location>
        <begin position="135"/>
        <end position="143"/>
    </location>
    <ligand>
        <name>5-phospho-alpha-D-ribose 1-diphosphate</name>
        <dbReference type="ChEBI" id="CHEBI:58017"/>
    </ligand>
</feature>
<feature type="binding site" evidence="1">
    <location>
        <position position="200"/>
    </location>
    <ligand>
        <name>uracil</name>
        <dbReference type="ChEBI" id="CHEBI:17568"/>
    </ligand>
</feature>
<feature type="binding site" evidence="1">
    <location>
        <begin position="205"/>
        <end position="207"/>
    </location>
    <ligand>
        <name>uracil</name>
        <dbReference type="ChEBI" id="CHEBI:17568"/>
    </ligand>
</feature>
<feature type="binding site" evidence="1">
    <location>
        <position position="206"/>
    </location>
    <ligand>
        <name>5-phospho-alpha-D-ribose 1-diphosphate</name>
        <dbReference type="ChEBI" id="CHEBI:58017"/>
    </ligand>
</feature>
<evidence type="ECO:0000255" key="1">
    <source>
        <dbReference type="HAMAP-Rule" id="MF_01218"/>
    </source>
</evidence>
<organism>
    <name type="scientific">Burkholderia pseudomallei (strain 1106a)</name>
    <dbReference type="NCBI Taxonomy" id="357348"/>
    <lineage>
        <taxon>Bacteria</taxon>
        <taxon>Pseudomonadati</taxon>
        <taxon>Pseudomonadota</taxon>
        <taxon>Betaproteobacteria</taxon>
        <taxon>Burkholderiales</taxon>
        <taxon>Burkholderiaceae</taxon>
        <taxon>Burkholderia</taxon>
        <taxon>pseudomallei group</taxon>
    </lineage>
</organism>
<proteinExistence type="inferred from homology"/>